<name>CLAVE_STYCL</name>
<feature type="signal peptide" evidence="1">
    <location>
        <begin position="1"/>
        <end position="19"/>
    </location>
</feature>
<feature type="propeptide" id="PRO_0000020945">
    <location>
        <begin position="20"/>
        <end position="29"/>
    </location>
</feature>
<feature type="peptide" id="PRO_0000020946" description="Clavanin-E">
    <location>
        <begin position="30"/>
        <end position="52"/>
    </location>
</feature>
<feature type="propeptide" id="PRO_0000020947">
    <location>
        <begin position="54"/>
        <end position="80"/>
    </location>
</feature>
<feature type="modified residue" description="Phenylalanine amide" evidence="2">
    <location>
        <position position="52"/>
    </location>
</feature>
<protein>
    <recommendedName>
        <fullName>Clavanin-E</fullName>
    </recommendedName>
</protein>
<keyword id="KW-0027">Amidation</keyword>
<keyword id="KW-0044">Antibiotic</keyword>
<keyword id="KW-0929">Antimicrobial</keyword>
<keyword id="KW-0964">Secreted</keyword>
<keyword id="KW-0732">Signal</keyword>
<organism>
    <name type="scientific">Styela clava</name>
    <name type="common">Sea squirt</name>
    <dbReference type="NCBI Taxonomy" id="7725"/>
    <lineage>
        <taxon>Eukaryota</taxon>
        <taxon>Metazoa</taxon>
        <taxon>Chordata</taxon>
        <taxon>Tunicata</taxon>
        <taxon>Ascidiacea</taxon>
        <taxon>Stolidobranchia</taxon>
        <taxon>Styelidae</taxon>
        <taxon>Styela</taxon>
    </lineage>
</organism>
<accession>O18492</accession>
<sequence>MKTTILILLILGLGINAKSLEERKSEEEKLFKLLGKIIHHVGNFVHGFSHVFGDDQQDNGKFYGYYAEDNGKHWYDTGDQ</sequence>
<dbReference type="EMBL" id="Y11018">
    <property type="protein sequence ID" value="CAA71900.1"/>
    <property type="molecule type" value="mRNA"/>
</dbReference>
<dbReference type="EMBL" id="Y10408">
    <property type="protein sequence ID" value="CAA71427.1"/>
    <property type="molecule type" value="mRNA"/>
</dbReference>
<dbReference type="GO" id="GO:0005576">
    <property type="term" value="C:extracellular region"/>
    <property type="evidence" value="ECO:0007669"/>
    <property type="project" value="UniProtKB-SubCell"/>
</dbReference>
<dbReference type="GO" id="GO:0042742">
    <property type="term" value="P:defense response to bacterium"/>
    <property type="evidence" value="ECO:0007669"/>
    <property type="project" value="UniProtKB-KW"/>
</dbReference>
<dbReference type="InterPro" id="IPR008453">
    <property type="entry name" value="Clavanin"/>
</dbReference>
<dbReference type="Pfam" id="PF05452">
    <property type="entry name" value="Clavanin"/>
    <property type="match status" value="1"/>
</dbReference>
<evidence type="ECO:0000255" key="1"/>
<evidence type="ECO:0000269" key="2">
    <source>
    </source>
</evidence>
<proteinExistence type="evidence at protein level"/>
<reference key="1">
    <citation type="journal article" date="1997" name="FEBS Lett.">
        <title>cDNA cloning of Clavanins: antimicrobial peptides of tunicate hemocytes.</title>
        <authorList>
            <person name="Zhao C."/>
            <person name="Lian H."/>
            <person name="Lee I.H."/>
            <person name="Lehrer R.I."/>
        </authorList>
    </citation>
    <scope>NUCLEOTIDE SEQUENCE [MRNA]</scope>
    <scope>AMIDATION AT PHE-52</scope>
    <source>
        <tissue>Hemocyte</tissue>
        <tissue>Pharynx</tissue>
    </source>
</reference>
<comment type="function">
    <text>Has antimicrobial activity.</text>
</comment>
<comment type="subcellular location">
    <subcellularLocation>
        <location>Secreted</location>
    </subcellularLocation>
</comment>